<name>SRK2H_ARATH</name>
<reference key="1">
    <citation type="journal article" date="1997" name="DNA Res.">
        <title>Structural analysis of Arabidopsis thaliana chromosome 5. I. Sequence features of the 1.6 Mb regions covered by twenty physically assigned P1 clones.</title>
        <authorList>
            <person name="Sato S."/>
            <person name="Kotani H."/>
            <person name="Nakamura Y."/>
            <person name="Kaneko T."/>
            <person name="Asamizu E."/>
            <person name="Fukami M."/>
            <person name="Miyajima N."/>
            <person name="Tabata S."/>
        </authorList>
    </citation>
    <scope>NUCLEOTIDE SEQUENCE [LARGE SCALE GENOMIC DNA]</scope>
    <source>
        <strain>cv. Columbia</strain>
    </source>
</reference>
<reference key="2">
    <citation type="journal article" date="2017" name="Plant J.">
        <title>Araport11: a complete reannotation of the Arabidopsis thaliana reference genome.</title>
        <authorList>
            <person name="Cheng C.Y."/>
            <person name="Krishnakumar V."/>
            <person name="Chan A.P."/>
            <person name="Thibaud-Nissen F."/>
            <person name="Schobel S."/>
            <person name="Town C.D."/>
        </authorList>
    </citation>
    <scope>GENOME REANNOTATION</scope>
    <source>
        <strain>cv. Columbia</strain>
    </source>
</reference>
<reference key="3">
    <citation type="submission" date="2006-07" db="EMBL/GenBank/DDBJ databases">
        <title>Large-scale analysis of RIKEN Arabidopsis full-length (RAFL) cDNAs.</title>
        <authorList>
            <person name="Totoki Y."/>
            <person name="Seki M."/>
            <person name="Ishida J."/>
            <person name="Nakajima M."/>
            <person name="Enju A."/>
            <person name="Kamiya A."/>
            <person name="Narusaka M."/>
            <person name="Shin-i T."/>
            <person name="Nakagawa M."/>
            <person name="Sakamoto N."/>
            <person name="Oishi K."/>
            <person name="Kohara Y."/>
            <person name="Kobayashi M."/>
            <person name="Toyoda A."/>
            <person name="Sakaki Y."/>
            <person name="Sakurai T."/>
            <person name="Iida K."/>
            <person name="Akiyama K."/>
            <person name="Satou M."/>
            <person name="Toyoda T."/>
            <person name="Konagaya A."/>
            <person name="Carninci P."/>
            <person name="Kawai J."/>
            <person name="Hayashizaki Y."/>
            <person name="Shinozaki K."/>
        </authorList>
    </citation>
    <scope>NUCLEOTIDE SEQUENCE [LARGE SCALE MRNA]</scope>
    <source>
        <strain>cv. Columbia</strain>
    </source>
</reference>
<reference key="4">
    <citation type="submission" date="2002-03" db="EMBL/GenBank/DDBJ databases">
        <title>Full-length cDNA from Arabidopsis thaliana.</title>
        <authorList>
            <person name="Brover V.V."/>
            <person name="Troukhan M.E."/>
            <person name="Alexandrov N.A."/>
            <person name="Lu Y.-P."/>
            <person name="Flavell R.B."/>
            <person name="Feldmann K.A."/>
        </authorList>
    </citation>
    <scope>NUCLEOTIDE SEQUENCE [LARGE SCALE MRNA]</scope>
</reference>
<reference key="5">
    <citation type="journal article" date="2003" name="Plant Physiol.">
        <title>The Arabidopsis CDPK-SnRK superfamily of protein kinases.</title>
        <authorList>
            <person name="Hrabak E.M."/>
            <person name="Chan C.W.M."/>
            <person name="Gribskov M."/>
            <person name="Harper J.F."/>
            <person name="Choi J.H."/>
            <person name="Halford N."/>
            <person name="Kudla J."/>
            <person name="Luan S."/>
            <person name="Nimmo H.G."/>
            <person name="Sussman M.R."/>
            <person name="Thomas M."/>
            <person name="Walker-Simmons K."/>
            <person name="Zhu J.-K."/>
            <person name="Harmon A.C."/>
        </authorList>
    </citation>
    <scope>GENE FAMILY</scope>
    <scope>NOMENCLATURE</scope>
</reference>
<reference key="6">
    <citation type="journal article" date="2004" name="J. Biol. Chem.">
        <title>Identification of nine sucrose nonfermenting 1-related protein kinases 2 activated by hyperosmotic and saline stresses in Arabidopsis thaliana.</title>
        <authorList>
            <person name="Boudsocq M."/>
            <person name="Barbier-Brygoo H."/>
            <person name="Lauriere C."/>
        </authorList>
    </citation>
    <scope>TISSUE SPECIFICITY</scope>
    <scope>INDUCTION</scope>
</reference>
<reference key="7">
    <citation type="journal article" date="2006" name="J. Biol. Chem.">
        <title>The regulatory domain of SRK2E/OST1/SnRK2.6 interacts with ABI1 and integrates abscisic acid (ABA) and osmotic stress signals controlling stomatal closure in Arabidopsis.</title>
        <authorList>
            <person name="Yoshida R."/>
            <person name="Umezawa T."/>
            <person name="Mizoguchi T."/>
            <person name="Takahashi S."/>
            <person name="Takahashi F."/>
            <person name="Shinozaki K."/>
        </authorList>
    </citation>
    <scope>GENE FAMILY</scope>
</reference>
<protein>
    <recommendedName>
        <fullName>Serine/threonine-protein kinase SRK2H</fullName>
        <ecNumber>2.7.11.1</ecNumber>
    </recommendedName>
    <alternativeName>
        <fullName>OST1-kinase-like 9</fullName>
    </alternativeName>
    <alternativeName>
        <fullName>SNF1-related kinase 2.5</fullName>
        <shortName>SnRK2.5</shortName>
    </alternativeName>
</protein>
<evidence type="ECO:0000255" key="1">
    <source>
        <dbReference type="PROSITE-ProRule" id="PRU00159"/>
    </source>
</evidence>
<evidence type="ECO:0000255" key="2">
    <source>
        <dbReference type="PROSITE-ProRule" id="PRU10027"/>
    </source>
</evidence>
<evidence type="ECO:0000256" key="3">
    <source>
        <dbReference type="SAM" id="MobiDB-lite"/>
    </source>
</evidence>
<evidence type="ECO:0000269" key="4">
    <source>
    </source>
</evidence>
<evidence type="ECO:0000305" key="5"/>
<feature type="chain" id="PRO_0000345162" description="Serine/threonine-protein kinase SRK2H">
    <location>
        <begin position="1"/>
        <end position="360"/>
    </location>
</feature>
<feature type="domain" description="Protein kinase" evidence="1">
    <location>
        <begin position="4"/>
        <end position="260"/>
    </location>
</feature>
<feature type="region of interest" description="Disordered" evidence="3">
    <location>
        <begin position="298"/>
        <end position="360"/>
    </location>
</feature>
<feature type="compositionally biased region" description="Acidic residues" evidence="3">
    <location>
        <begin position="313"/>
        <end position="343"/>
    </location>
</feature>
<feature type="compositionally biased region" description="Basic and acidic residues" evidence="3">
    <location>
        <begin position="344"/>
        <end position="360"/>
    </location>
</feature>
<feature type="active site" description="Proton acceptor" evidence="1 2">
    <location>
        <position position="123"/>
    </location>
</feature>
<feature type="binding site" evidence="1">
    <location>
        <begin position="10"/>
        <end position="18"/>
    </location>
    <ligand>
        <name>ATP</name>
        <dbReference type="ChEBI" id="CHEBI:30616"/>
    </ligand>
</feature>
<feature type="binding site" evidence="1">
    <location>
        <position position="33"/>
    </location>
    <ligand>
        <name>ATP</name>
        <dbReference type="ChEBI" id="CHEBI:30616"/>
    </ligand>
</feature>
<feature type="sequence conflict" description="In Ref. 3; BAE99712." evidence="5" ref="3">
    <original>R</original>
    <variation>K</variation>
    <location>
        <position position="174"/>
    </location>
</feature>
<feature type="sequence conflict" description="In Ref. 3; BAE99712." evidence="5" ref="3">
    <original>E</original>
    <variation>V</variation>
    <location>
        <position position="335"/>
    </location>
</feature>
<feature type="sequence conflict" description="In Ref. 4; AAM65503." evidence="5" ref="4">
    <location>
        <begin position="340"/>
        <end position="341"/>
    </location>
</feature>
<sequence>MDKYEVVKDLGAGNFGVARLLRHKETKELVAMKYIERGRKIDENVAREIINHRSLRHPNIIRFKEVILTPTHLAIVMEYASGGELFERICNAGRFSEAEARYFFQQLICGVDYCHSLQICHRDLKLENTLLDGSPAPLLKICDFGYSKSSLLHSRPKSTVGTPAYIAPEVLSRREYDGKHADVWSCGVTLYVMLVGGYPFEDPDDPRNFRKTIQRIMAVQYKIPDYVHISQECRHLLSRIFVTNSAKRITLKEIKKHPWYLKNLPKELTEPAQAAYYKRETPSFSLQSVEDIMKIVGEARNPAPSSNAVKGFDDDEEDVEDEVEEEEEEEEEEEEEEEEEEDEYEKHVKEAHSCQEPPKA</sequence>
<accession>Q9FFP9</accession>
<accession>Q0WT36</accession>
<accession>Q8LA99</accession>
<dbReference type="EC" id="2.7.11.1"/>
<dbReference type="EMBL" id="AB005234">
    <property type="protein sequence ID" value="BAB10458.1"/>
    <property type="molecule type" value="Genomic_DNA"/>
</dbReference>
<dbReference type="EMBL" id="CP002688">
    <property type="protein sequence ID" value="AED97781.1"/>
    <property type="molecule type" value="Genomic_DNA"/>
</dbReference>
<dbReference type="EMBL" id="AK227726">
    <property type="protein sequence ID" value="BAE99712.1"/>
    <property type="molecule type" value="mRNA"/>
</dbReference>
<dbReference type="EMBL" id="AY087955">
    <property type="protein sequence ID" value="AAM65503.1"/>
    <property type="molecule type" value="mRNA"/>
</dbReference>
<dbReference type="RefSeq" id="NP_201170.1">
    <property type="nucleotide sequence ID" value="NM_125760.2"/>
</dbReference>
<dbReference type="SMR" id="Q9FFP9"/>
<dbReference type="BioGRID" id="21727">
    <property type="interactions" value="2"/>
</dbReference>
<dbReference type="FunCoup" id="Q9FFP9">
    <property type="interactions" value="1152"/>
</dbReference>
<dbReference type="STRING" id="3702.Q9FFP9"/>
<dbReference type="iPTMnet" id="Q9FFP9"/>
<dbReference type="PaxDb" id="3702-AT5G63650.1"/>
<dbReference type="ProteomicsDB" id="226731"/>
<dbReference type="EnsemblPlants" id="AT5G63650.1">
    <property type="protein sequence ID" value="AT5G63650.1"/>
    <property type="gene ID" value="AT5G63650"/>
</dbReference>
<dbReference type="GeneID" id="836485"/>
<dbReference type="Gramene" id="AT5G63650.1">
    <property type="protein sequence ID" value="AT5G63650.1"/>
    <property type="gene ID" value="AT5G63650"/>
</dbReference>
<dbReference type="KEGG" id="ath:AT5G63650"/>
<dbReference type="Araport" id="AT5G63650"/>
<dbReference type="TAIR" id="AT5G63650">
    <property type="gene designation" value="SNRK2.5"/>
</dbReference>
<dbReference type="eggNOG" id="KOG0583">
    <property type="taxonomic scope" value="Eukaryota"/>
</dbReference>
<dbReference type="HOGENOM" id="CLU_000288_63_0_1"/>
<dbReference type="InParanoid" id="Q9FFP9"/>
<dbReference type="PhylomeDB" id="Q9FFP9"/>
<dbReference type="PRO" id="PR:Q9FFP9"/>
<dbReference type="Proteomes" id="UP000006548">
    <property type="component" value="Chromosome 5"/>
</dbReference>
<dbReference type="ExpressionAtlas" id="Q9FFP9">
    <property type="expression patterns" value="baseline and differential"/>
</dbReference>
<dbReference type="GO" id="GO:0009536">
    <property type="term" value="C:plastid"/>
    <property type="evidence" value="ECO:0007005"/>
    <property type="project" value="TAIR"/>
</dbReference>
<dbReference type="GO" id="GO:0005524">
    <property type="term" value="F:ATP binding"/>
    <property type="evidence" value="ECO:0007669"/>
    <property type="project" value="UniProtKB-KW"/>
</dbReference>
<dbReference type="GO" id="GO:0016301">
    <property type="term" value="F:kinase activity"/>
    <property type="evidence" value="ECO:0000314"/>
    <property type="project" value="TAIR"/>
</dbReference>
<dbReference type="GO" id="GO:0003729">
    <property type="term" value="F:mRNA binding"/>
    <property type="evidence" value="ECO:0007005"/>
    <property type="project" value="TAIR"/>
</dbReference>
<dbReference type="GO" id="GO:0106310">
    <property type="term" value="F:protein serine kinase activity"/>
    <property type="evidence" value="ECO:0007669"/>
    <property type="project" value="RHEA"/>
</dbReference>
<dbReference type="GO" id="GO:0004674">
    <property type="term" value="F:protein serine/threonine kinase activity"/>
    <property type="evidence" value="ECO:0007669"/>
    <property type="project" value="UniProtKB-KW"/>
</dbReference>
<dbReference type="GO" id="GO:0006970">
    <property type="term" value="P:response to osmotic stress"/>
    <property type="evidence" value="ECO:0000314"/>
    <property type="project" value="TAIR"/>
</dbReference>
<dbReference type="GO" id="GO:0009651">
    <property type="term" value="P:response to salt stress"/>
    <property type="evidence" value="ECO:0000314"/>
    <property type="project" value="TAIR"/>
</dbReference>
<dbReference type="CDD" id="cd14662">
    <property type="entry name" value="STKc_SnRK2"/>
    <property type="match status" value="1"/>
</dbReference>
<dbReference type="FunFam" id="1.10.510.10:FF:000132">
    <property type="entry name" value="Serine/threonine-protein kinase SRK2A"/>
    <property type="match status" value="1"/>
</dbReference>
<dbReference type="FunFam" id="3.30.200.20:FF:000045">
    <property type="entry name" value="Serine/threonine-protein kinase SRK2E"/>
    <property type="match status" value="1"/>
</dbReference>
<dbReference type="Gene3D" id="3.30.200.20">
    <property type="entry name" value="Phosphorylase Kinase, domain 1"/>
    <property type="match status" value="1"/>
</dbReference>
<dbReference type="Gene3D" id="1.10.510.10">
    <property type="entry name" value="Transferase(Phosphotransferase) domain 1"/>
    <property type="match status" value="1"/>
</dbReference>
<dbReference type="InterPro" id="IPR011009">
    <property type="entry name" value="Kinase-like_dom_sf"/>
</dbReference>
<dbReference type="InterPro" id="IPR000719">
    <property type="entry name" value="Prot_kinase_dom"/>
</dbReference>
<dbReference type="InterPro" id="IPR017441">
    <property type="entry name" value="Protein_kinase_ATP_BS"/>
</dbReference>
<dbReference type="InterPro" id="IPR008271">
    <property type="entry name" value="Ser/Thr_kinase_AS"/>
</dbReference>
<dbReference type="PANTHER" id="PTHR24343">
    <property type="entry name" value="SERINE/THREONINE KINASE"/>
    <property type="match status" value="1"/>
</dbReference>
<dbReference type="PANTHER" id="PTHR24343:SF559">
    <property type="entry name" value="SERINE_THREONINE-PROTEIN KINASE SRK2H"/>
    <property type="match status" value="1"/>
</dbReference>
<dbReference type="Pfam" id="PF00069">
    <property type="entry name" value="Pkinase"/>
    <property type="match status" value="1"/>
</dbReference>
<dbReference type="SMART" id="SM00220">
    <property type="entry name" value="S_TKc"/>
    <property type="match status" value="1"/>
</dbReference>
<dbReference type="SUPFAM" id="SSF56112">
    <property type="entry name" value="Protein kinase-like (PK-like)"/>
    <property type="match status" value="1"/>
</dbReference>
<dbReference type="PROSITE" id="PS00107">
    <property type="entry name" value="PROTEIN_KINASE_ATP"/>
    <property type="match status" value="1"/>
</dbReference>
<dbReference type="PROSITE" id="PS50011">
    <property type="entry name" value="PROTEIN_KINASE_DOM"/>
    <property type="match status" value="1"/>
</dbReference>
<dbReference type="PROSITE" id="PS00108">
    <property type="entry name" value="PROTEIN_KINASE_ST"/>
    <property type="match status" value="1"/>
</dbReference>
<organism>
    <name type="scientific">Arabidopsis thaliana</name>
    <name type="common">Mouse-ear cress</name>
    <dbReference type="NCBI Taxonomy" id="3702"/>
    <lineage>
        <taxon>Eukaryota</taxon>
        <taxon>Viridiplantae</taxon>
        <taxon>Streptophyta</taxon>
        <taxon>Embryophyta</taxon>
        <taxon>Tracheophyta</taxon>
        <taxon>Spermatophyta</taxon>
        <taxon>Magnoliopsida</taxon>
        <taxon>eudicotyledons</taxon>
        <taxon>Gunneridae</taxon>
        <taxon>Pentapetalae</taxon>
        <taxon>rosids</taxon>
        <taxon>malvids</taxon>
        <taxon>Brassicales</taxon>
        <taxon>Brassicaceae</taxon>
        <taxon>Camelineae</taxon>
        <taxon>Arabidopsis</taxon>
    </lineage>
</organism>
<keyword id="KW-0067">ATP-binding</keyword>
<keyword id="KW-0418">Kinase</keyword>
<keyword id="KW-0547">Nucleotide-binding</keyword>
<keyword id="KW-1185">Reference proteome</keyword>
<keyword id="KW-0723">Serine/threonine-protein kinase</keyword>
<keyword id="KW-0808">Transferase</keyword>
<comment type="catalytic activity">
    <reaction>
        <text>L-seryl-[protein] + ATP = O-phospho-L-seryl-[protein] + ADP + H(+)</text>
        <dbReference type="Rhea" id="RHEA:17989"/>
        <dbReference type="Rhea" id="RHEA-COMP:9863"/>
        <dbReference type="Rhea" id="RHEA-COMP:11604"/>
        <dbReference type="ChEBI" id="CHEBI:15378"/>
        <dbReference type="ChEBI" id="CHEBI:29999"/>
        <dbReference type="ChEBI" id="CHEBI:30616"/>
        <dbReference type="ChEBI" id="CHEBI:83421"/>
        <dbReference type="ChEBI" id="CHEBI:456216"/>
        <dbReference type="EC" id="2.7.11.1"/>
    </reaction>
</comment>
<comment type="catalytic activity">
    <reaction>
        <text>L-threonyl-[protein] + ATP = O-phospho-L-threonyl-[protein] + ADP + H(+)</text>
        <dbReference type="Rhea" id="RHEA:46608"/>
        <dbReference type="Rhea" id="RHEA-COMP:11060"/>
        <dbReference type="Rhea" id="RHEA-COMP:11605"/>
        <dbReference type="ChEBI" id="CHEBI:15378"/>
        <dbReference type="ChEBI" id="CHEBI:30013"/>
        <dbReference type="ChEBI" id="CHEBI:30616"/>
        <dbReference type="ChEBI" id="CHEBI:61977"/>
        <dbReference type="ChEBI" id="CHEBI:456216"/>
        <dbReference type="EC" id="2.7.11.1"/>
    </reaction>
</comment>
<comment type="tissue specificity">
    <text evidence="4">Expressed in seedlings.</text>
</comment>
<comment type="induction">
    <text evidence="4">By salt and osmotic stress (at protein level).</text>
</comment>
<comment type="similarity">
    <text evidence="1">Belongs to the protein kinase superfamily. Ser/Thr protein kinase family.</text>
</comment>
<gene>
    <name type="primary">SRK2H</name>
    <name type="synonym">OSKL9</name>
    <name type="synonym">SNRK2.5</name>
    <name type="ordered locus">At5g63650</name>
    <name type="ORF">MBK5.13</name>
</gene>
<proteinExistence type="evidence at protein level"/>